<feature type="transit peptide" description="Mitochondrion">
    <location>
        <begin position="1"/>
        <end position="13"/>
    </location>
</feature>
<feature type="chain" id="PRO_0000203054" description="Amino-acid acetyltransferase, mitochondrial">
    <location>
        <begin position="14"/>
        <end position="574"/>
    </location>
</feature>
<feature type="domain" description="N-acetyltransferase" evidence="1">
    <location>
        <begin position="392"/>
        <end position="560"/>
    </location>
</feature>
<proteinExistence type="evidence at protein level"/>
<comment type="function">
    <text evidence="2 5 6">N-acetylglutamate synthase involved in arginine biosynthesis.</text>
</comment>
<comment type="catalytic activity">
    <reaction evidence="2 6">
        <text>L-glutamate + acetyl-CoA = N-acetyl-L-glutamate + CoA + H(+)</text>
        <dbReference type="Rhea" id="RHEA:24292"/>
        <dbReference type="ChEBI" id="CHEBI:15378"/>
        <dbReference type="ChEBI" id="CHEBI:29985"/>
        <dbReference type="ChEBI" id="CHEBI:44337"/>
        <dbReference type="ChEBI" id="CHEBI:57287"/>
        <dbReference type="ChEBI" id="CHEBI:57288"/>
        <dbReference type="EC" id="2.3.1.1"/>
    </reaction>
</comment>
<comment type="activity regulation">
    <text evidence="6">Feedback inhibition by L-arginine.</text>
</comment>
<comment type="biophysicochemical properties">
    <phDependence>
        <text>Optimum pH is 8.5-9.5.</text>
    </phDependence>
</comment>
<comment type="pathway">
    <text evidence="2 6">Amino-acid biosynthesis; L-arginine biosynthesis; N(2)-acetyl-L-ornithine from L-glutamate: step 1/4.</text>
</comment>
<comment type="subunit">
    <text evidence="2">Interacts with the acetylglutamate kinase chain of AGR5,6.</text>
</comment>
<comment type="subcellular location">
    <subcellularLocation>
        <location evidence="3 5">Mitochondrion</location>
    </subcellularLocation>
</comment>
<comment type="miscellaneous">
    <text evidence="4">Present with 112 molecules/cell in log phase SD medium.</text>
</comment>
<comment type="similarity">
    <text evidence="8">Belongs to the acetyltransferase family.</text>
</comment>
<organism>
    <name type="scientific">Saccharomyces cerevisiae (strain ATCC 204508 / S288c)</name>
    <name type="common">Baker's yeast</name>
    <dbReference type="NCBI Taxonomy" id="559292"/>
    <lineage>
        <taxon>Eukaryota</taxon>
        <taxon>Fungi</taxon>
        <taxon>Dikarya</taxon>
        <taxon>Ascomycota</taxon>
        <taxon>Saccharomycotina</taxon>
        <taxon>Saccharomycetes</taxon>
        <taxon>Saccharomycetales</taxon>
        <taxon>Saccharomycetaceae</taxon>
        <taxon>Saccharomyces</taxon>
    </lineage>
</organism>
<evidence type="ECO:0000255" key="1">
    <source>
        <dbReference type="PROSITE-ProRule" id="PRU00532"/>
    </source>
</evidence>
<evidence type="ECO:0000269" key="2">
    <source>
    </source>
</evidence>
<evidence type="ECO:0000269" key="3">
    <source>
    </source>
</evidence>
<evidence type="ECO:0000269" key="4">
    <source>
    </source>
</evidence>
<evidence type="ECO:0000269" key="5">
    <source>
    </source>
</evidence>
<evidence type="ECO:0000269" key="6">
    <source>
    </source>
</evidence>
<evidence type="ECO:0000303" key="7">
    <source>
    </source>
</evidence>
<evidence type="ECO:0000305" key="8"/>
<protein>
    <recommendedName>
        <fullName evidence="7">Amino-acid acetyltransferase, mitochondrial</fullName>
        <ecNumber evidence="2 6">2.3.1.1</ecNumber>
    </recommendedName>
    <alternativeName>
        <fullName evidence="7">Arginine-requiring protein 2</fullName>
    </alternativeName>
    <alternativeName>
        <fullName evidence="7">Glutamate N-acetyltransferase</fullName>
    </alternativeName>
    <alternativeName>
        <fullName evidence="7">N-acetylglutamate synthase</fullName>
        <shortName evidence="7">AGS</shortName>
        <shortName evidence="7">NAGS</shortName>
    </alternativeName>
</protein>
<reference key="1">
    <citation type="submission" date="1995-06" db="EMBL/GenBank/DDBJ databases">
        <authorList>
            <person name="Sor F.J."/>
        </authorList>
    </citation>
    <scope>NUCLEOTIDE SEQUENCE [GENOMIC DNA]</scope>
    <source>
        <strain>ATCC 204508 / S288c</strain>
    </source>
</reference>
<reference key="2">
    <citation type="journal article" date="1995" name="Yeast">
        <title>Sequence of a 17.1 kb DNA fragment from chromosome X of Saccharomyces cerevisiae includes the mitochondrial ribosomal protein L8.</title>
        <authorList>
            <person name="Vandenbol M."/>
            <person name="Durand P."/>
            <person name="Dion C."/>
            <person name="Portetelle D."/>
            <person name="Hilger F."/>
        </authorList>
    </citation>
    <scope>NUCLEOTIDE SEQUENCE [GENOMIC DNA]</scope>
    <source>
        <strain>ATCC 204508 / S288c</strain>
    </source>
</reference>
<reference key="3">
    <citation type="journal article" date="1996" name="EMBO J.">
        <title>Complete nucleotide sequence of Saccharomyces cerevisiae chromosome X.</title>
        <authorList>
            <person name="Galibert F."/>
            <person name="Alexandraki D."/>
            <person name="Baur A."/>
            <person name="Boles E."/>
            <person name="Chalwatzis N."/>
            <person name="Chuat J.-C."/>
            <person name="Coster F."/>
            <person name="Cziepluch C."/>
            <person name="de Haan M."/>
            <person name="Domdey H."/>
            <person name="Durand P."/>
            <person name="Entian K.-D."/>
            <person name="Gatius M."/>
            <person name="Goffeau A."/>
            <person name="Grivell L.A."/>
            <person name="Hennemann A."/>
            <person name="Herbert C.J."/>
            <person name="Heumann K."/>
            <person name="Hilger F."/>
            <person name="Hollenberg C.P."/>
            <person name="Huang M.-E."/>
            <person name="Jacq C."/>
            <person name="Jauniaux J.-C."/>
            <person name="Katsoulou C."/>
            <person name="Kirchrath L."/>
            <person name="Kleine K."/>
            <person name="Kordes E."/>
            <person name="Koetter P."/>
            <person name="Liebl S."/>
            <person name="Louis E.J."/>
            <person name="Manus V."/>
            <person name="Mewes H.-W."/>
            <person name="Miosga T."/>
            <person name="Obermaier B."/>
            <person name="Perea J."/>
            <person name="Pohl T.M."/>
            <person name="Portetelle D."/>
            <person name="Pujol A."/>
            <person name="Purnelle B."/>
            <person name="Ramezani Rad M."/>
            <person name="Rasmussen S.W."/>
            <person name="Rose M."/>
            <person name="Rossau R."/>
            <person name="Schaaff-Gerstenschlaeger I."/>
            <person name="Smits P.H.M."/>
            <person name="Scarcez T."/>
            <person name="Soriano N."/>
            <person name="To Van D."/>
            <person name="Tzermia M."/>
            <person name="Van Broekhoven A."/>
            <person name="Vandenbol M."/>
            <person name="Wedler H."/>
            <person name="von Wettstein D."/>
            <person name="Wambutt R."/>
            <person name="Zagulski M."/>
            <person name="Zollner A."/>
            <person name="Karpfinger-Hartl L."/>
        </authorList>
    </citation>
    <scope>NUCLEOTIDE SEQUENCE [LARGE SCALE GENOMIC DNA]</scope>
    <source>
        <strain>ATCC 204508 / S288c</strain>
    </source>
</reference>
<reference key="4">
    <citation type="journal article" date="2014" name="G3 (Bethesda)">
        <title>The reference genome sequence of Saccharomyces cerevisiae: Then and now.</title>
        <authorList>
            <person name="Engel S.R."/>
            <person name="Dietrich F.S."/>
            <person name="Fisk D.G."/>
            <person name="Binkley G."/>
            <person name="Balakrishnan R."/>
            <person name="Costanzo M.C."/>
            <person name="Dwight S.S."/>
            <person name="Hitz B.C."/>
            <person name="Karra K."/>
            <person name="Nash R.S."/>
            <person name="Weng S."/>
            <person name="Wong E.D."/>
            <person name="Lloyd P."/>
            <person name="Skrzypek M.S."/>
            <person name="Miyasato S.R."/>
            <person name="Simison M."/>
            <person name="Cherry J.M."/>
        </authorList>
    </citation>
    <scope>GENOME REANNOTATION</scope>
    <source>
        <strain>ATCC 204508 / S288c</strain>
    </source>
</reference>
<reference key="5">
    <citation type="journal article" date="1978" name="J. Bacteriol.">
        <title>Arginine metabolism in Saccharomyces cerevisiae: subcellular localization of the enzymes.</title>
        <authorList>
            <person name="Jauniaux J.-C."/>
            <person name="Urrestarazu L.A."/>
            <person name="Wiame J.-M."/>
        </authorList>
    </citation>
    <scope>FUNCTION</scope>
    <scope>SUBCELLULAR LOCATION</scope>
</reference>
<reference key="6">
    <citation type="journal article" date="1979" name="J. Bacteriol.">
        <title>Regulation of activity and synthesis of N-acetylglutamate synthase from Saccharomyces cerevisiae.</title>
        <authorList>
            <person name="Wipe B."/>
            <person name="Leisinger T."/>
        </authorList>
    </citation>
    <scope>FUNCTION</scope>
    <scope>CATALYTIC ACTIVITY</scope>
    <scope>ACTIVITY REGULATION</scope>
    <scope>BIOPHYSICOCHEMICAL PROPERTIES</scope>
</reference>
<reference key="7">
    <citation type="journal article" date="2001" name="J. Biol. Chem.">
        <title>A new yeast metabolon involving at least the two first enzymes of arginine biosynthesis: acetylglutamate synthase activity requires complex formation with acetylglutamate kinase.</title>
        <authorList>
            <person name="Abadjieva A."/>
            <person name="Pauwels K."/>
            <person name="Hilven P."/>
            <person name="Crabeel M."/>
        </authorList>
    </citation>
    <scope>FUNCTION</scope>
    <scope>CATALYTIC ACTIVITY</scope>
    <scope>INTERACTION WITH ACETYLGLUTAMATE KINASE</scope>
</reference>
<reference key="8">
    <citation type="journal article" date="2003" name="Nature">
        <title>Global analysis of protein localization in budding yeast.</title>
        <authorList>
            <person name="Huh W.-K."/>
            <person name="Falvo J.V."/>
            <person name="Gerke L.C."/>
            <person name="Carroll A.S."/>
            <person name="Howson R.W."/>
            <person name="Weissman J.S."/>
            <person name="O'Shea E.K."/>
        </authorList>
    </citation>
    <scope>SUBCELLULAR LOCATION [LARGE SCALE ANALYSIS]</scope>
</reference>
<reference key="9">
    <citation type="journal article" date="2003" name="Nature">
        <title>Global analysis of protein expression in yeast.</title>
        <authorList>
            <person name="Ghaemmaghami S."/>
            <person name="Huh W.-K."/>
            <person name="Bower K."/>
            <person name="Howson R.W."/>
            <person name="Belle A."/>
            <person name="Dephoure N."/>
            <person name="O'Shea E.K."/>
            <person name="Weissman J.S."/>
        </authorList>
    </citation>
    <scope>LEVEL OF PROTEIN EXPRESSION [LARGE SCALE ANALYSIS]</scope>
</reference>
<name>NAGS_YEAST</name>
<sequence>MWRRIFAHELKYDQPNASSKNLILSVLNTTATKREAKDYLSKYTNDSGQHNHCLFFIRDLHKVAPAILSQFSSVIKRLGMLGLRPMFVIPPSPTHVNIQAELLDSIVTEADLKPLHLKEGLTKSRTGLYHSVFSQESRFFDIGNSNFIPIVKPYVYNEETASEFMTKDVVKFMDCLCQGNIPHIDKFFILNNAGGIPSGERNDNAHVFINLSQELEHLSSSLSHNISTLTKREPRSQNLLHRMEVYVKKDEISSLECEYHDHLENLLLMDKVLSNLAATATGLITTVKAAALSSDRKNPLVYNLLTDRSLISSSLPRFKKKDGEIDSPANMFDDHAWYELPSQQVNAAPSNSDAVLVTTVLKKGVHIKTYDYKTLTQFNSIGLPKKFHVPEKGAKPSSNSPKLDINKFKSIIDQSFKRSLDLHDYIKRINGKIATIIVIGDYEGIAILTYEGSEENSFVYLDKFAVLPHLKGSLGISDIIFNLMFKKFPNEILWRSRKDNVVNKWYFQRSVAVLDLSIDLDPEHCDEKQSQFKLFYYGNPQYAKRALRDKKRLREFMRSVRDIKPSWENEKNIS</sequence>
<dbReference type="EC" id="2.3.1.1" evidence="2 6"/>
<dbReference type="EMBL" id="X88851">
    <property type="protein sequence ID" value="CAA61310.1"/>
    <property type="molecule type" value="Genomic_DNA"/>
</dbReference>
<dbReference type="EMBL" id="Z34288">
    <property type="protein sequence ID" value="CAA84051.1"/>
    <property type="molecule type" value="Genomic_DNA"/>
</dbReference>
<dbReference type="EMBL" id="Z49346">
    <property type="protein sequence ID" value="CAA89363.1"/>
    <property type="molecule type" value="Genomic_DNA"/>
</dbReference>
<dbReference type="EMBL" id="BK006943">
    <property type="protein sequence ID" value="DAA08728.1"/>
    <property type="molecule type" value="Genomic_DNA"/>
</dbReference>
<dbReference type="PIR" id="S50800">
    <property type="entry name" value="S50800"/>
</dbReference>
<dbReference type="RefSeq" id="NP_012464.1">
    <property type="nucleotide sequence ID" value="NM_001181504.1"/>
</dbReference>
<dbReference type="SMR" id="P40360"/>
<dbReference type="BioGRID" id="33684">
    <property type="interactions" value="27"/>
</dbReference>
<dbReference type="ComplexPortal" id="CPX-1151">
    <property type="entry name" value="N-acetylglutamate synthase NAGS/NAGK complex"/>
</dbReference>
<dbReference type="DIP" id="DIP-5679N"/>
<dbReference type="FunCoup" id="P40360">
    <property type="interactions" value="146"/>
</dbReference>
<dbReference type="IntAct" id="P40360">
    <property type="interactions" value="2"/>
</dbReference>
<dbReference type="STRING" id="4932.YJL071W"/>
<dbReference type="CarbonylDB" id="P40360"/>
<dbReference type="GlyGen" id="P40360">
    <property type="glycosylation" value="4 sites, 1 O-linked glycan (4 sites)"/>
</dbReference>
<dbReference type="iPTMnet" id="P40360"/>
<dbReference type="PaxDb" id="4932-YJL071W"/>
<dbReference type="PeptideAtlas" id="P40360"/>
<dbReference type="EnsemblFungi" id="YJL071W_mRNA">
    <property type="protein sequence ID" value="YJL071W"/>
    <property type="gene ID" value="YJL071W"/>
</dbReference>
<dbReference type="GeneID" id="853374"/>
<dbReference type="KEGG" id="sce:YJL071W"/>
<dbReference type="AGR" id="SGD:S000003607"/>
<dbReference type="SGD" id="S000003607">
    <property type="gene designation" value="ARG2"/>
</dbReference>
<dbReference type="VEuPathDB" id="FungiDB:YJL071W"/>
<dbReference type="eggNOG" id="KOG2436">
    <property type="taxonomic scope" value="Eukaryota"/>
</dbReference>
<dbReference type="GeneTree" id="ENSGT00390000005602"/>
<dbReference type="HOGENOM" id="CLU_013088_0_0_1"/>
<dbReference type="InParanoid" id="P40360"/>
<dbReference type="OMA" id="HAWYELP"/>
<dbReference type="OrthoDB" id="5585968at2759"/>
<dbReference type="BioCyc" id="YEAST:YJL071W-MONOMER"/>
<dbReference type="UniPathway" id="UPA00068">
    <property type="reaction ID" value="UER00106"/>
</dbReference>
<dbReference type="BioGRID-ORCS" id="853374">
    <property type="hits" value="1 hit in 10 CRISPR screens"/>
</dbReference>
<dbReference type="PRO" id="PR:P40360"/>
<dbReference type="Proteomes" id="UP000002311">
    <property type="component" value="Chromosome X"/>
</dbReference>
<dbReference type="RNAct" id="P40360">
    <property type="molecule type" value="protein"/>
</dbReference>
<dbReference type="GO" id="GO:0005759">
    <property type="term" value="C:mitochondrial matrix"/>
    <property type="evidence" value="ECO:0000314"/>
    <property type="project" value="ComplexPortal"/>
</dbReference>
<dbReference type="GO" id="GO:0106098">
    <property type="term" value="C:NAGS/NAGK complex"/>
    <property type="evidence" value="ECO:0000353"/>
    <property type="project" value="ComplexPortal"/>
</dbReference>
<dbReference type="GO" id="GO:0004042">
    <property type="term" value="F:L-glutamate N-acetyltransferase activity"/>
    <property type="evidence" value="ECO:0000314"/>
    <property type="project" value="SGD"/>
</dbReference>
<dbReference type="GO" id="GO:0006526">
    <property type="term" value="P:L-arginine biosynthetic process"/>
    <property type="evidence" value="ECO:0000314"/>
    <property type="project" value="ComplexPortal"/>
</dbReference>
<dbReference type="GO" id="GO:0006592">
    <property type="term" value="P:ornithine biosynthetic process"/>
    <property type="evidence" value="ECO:0000315"/>
    <property type="project" value="SGD"/>
</dbReference>
<dbReference type="FunFam" id="3.40.630.30:FF:000049">
    <property type="entry name" value="Amino-acid acetyltransferase, mitochondrial"/>
    <property type="match status" value="1"/>
</dbReference>
<dbReference type="Gene3D" id="3.40.630.30">
    <property type="match status" value="1"/>
</dbReference>
<dbReference type="InterPro" id="IPR011190">
    <property type="entry name" value="GlcNAc_Synth_fun"/>
</dbReference>
<dbReference type="InterPro" id="IPR006855">
    <property type="entry name" value="Vertebrate-like_GNAT_dom"/>
</dbReference>
<dbReference type="PANTHER" id="PTHR23342:SF4">
    <property type="entry name" value="AMINO-ACID ACETYLTRANSFERASE, MITOCHONDRIAL"/>
    <property type="match status" value="1"/>
</dbReference>
<dbReference type="PANTHER" id="PTHR23342">
    <property type="entry name" value="N-ACETYLGLUTAMATE SYNTHASE"/>
    <property type="match status" value="1"/>
</dbReference>
<dbReference type="Pfam" id="PF04768">
    <property type="entry name" value="NAT"/>
    <property type="match status" value="1"/>
</dbReference>
<dbReference type="PIRSF" id="PIRSF007892">
    <property type="entry name" value="NAGS_fungal"/>
    <property type="match status" value="1"/>
</dbReference>
<dbReference type="PROSITE" id="PS51731">
    <property type="entry name" value="GNAT_NAGS"/>
    <property type="match status" value="1"/>
</dbReference>
<accession>P40360</accession>
<accession>D6VWB2</accession>
<gene>
    <name evidence="7" type="primary">ARG2</name>
    <name type="ordered locus">YJL071W</name>
    <name type="ORF">HRB574</name>
    <name type="ORF">J1091</name>
</gene>
<keyword id="KW-0012">Acyltransferase</keyword>
<keyword id="KW-0028">Amino-acid biosynthesis</keyword>
<keyword id="KW-0496">Mitochondrion</keyword>
<keyword id="KW-1185">Reference proteome</keyword>
<keyword id="KW-0808">Transferase</keyword>
<keyword id="KW-0809">Transit peptide</keyword>